<organism>
    <name type="scientific">Citrus sinensis</name>
    <name type="common">Sweet orange</name>
    <name type="synonym">Citrus aurantium var. sinensis</name>
    <dbReference type="NCBI Taxonomy" id="2711"/>
    <lineage>
        <taxon>Eukaryota</taxon>
        <taxon>Viridiplantae</taxon>
        <taxon>Streptophyta</taxon>
        <taxon>Embryophyta</taxon>
        <taxon>Tracheophyta</taxon>
        <taxon>Spermatophyta</taxon>
        <taxon>Magnoliopsida</taxon>
        <taxon>eudicotyledons</taxon>
        <taxon>Gunneridae</taxon>
        <taxon>Pentapetalae</taxon>
        <taxon>rosids</taxon>
        <taxon>malvids</taxon>
        <taxon>Sapindales</taxon>
        <taxon>Rutaceae</taxon>
        <taxon>Aurantioideae</taxon>
        <taxon>Citrus</taxon>
    </lineage>
</organism>
<feature type="chain" id="PRO_0000275193" description="ATP synthase epsilon chain, chloroplastic">
    <location>
        <begin position="1"/>
        <end position="133"/>
    </location>
</feature>
<dbReference type="EMBL" id="DQ864733">
    <property type="protein sequence ID" value="ABI49026.1"/>
    <property type="molecule type" value="Genomic_DNA"/>
</dbReference>
<dbReference type="RefSeq" id="YP_740481.1">
    <property type="nucleotide sequence ID" value="NC_008334.1"/>
</dbReference>
<dbReference type="SMR" id="Q09MH2"/>
<dbReference type="GeneID" id="4271211"/>
<dbReference type="KEGG" id="cit:4271211"/>
<dbReference type="OrthoDB" id="802542at71240"/>
<dbReference type="GO" id="GO:0009535">
    <property type="term" value="C:chloroplast thylakoid membrane"/>
    <property type="evidence" value="ECO:0007669"/>
    <property type="project" value="UniProtKB-SubCell"/>
</dbReference>
<dbReference type="GO" id="GO:0045259">
    <property type="term" value="C:proton-transporting ATP synthase complex"/>
    <property type="evidence" value="ECO:0007669"/>
    <property type="project" value="UniProtKB-KW"/>
</dbReference>
<dbReference type="GO" id="GO:0005524">
    <property type="term" value="F:ATP binding"/>
    <property type="evidence" value="ECO:0007669"/>
    <property type="project" value="UniProtKB-UniRule"/>
</dbReference>
<dbReference type="GO" id="GO:0046933">
    <property type="term" value="F:proton-transporting ATP synthase activity, rotational mechanism"/>
    <property type="evidence" value="ECO:0007669"/>
    <property type="project" value="UniProtKB-UniRule"/>
</dbReference>
<dbReference type="CDD" id="cd12152">
    <property type="entry name" value="F1-ATPase_delta"/>
    <property type="match status" value="1"/>
</dbReference>
<dbReference type="FunFam" id="2.60.15.10:FF:000002">
    <property type="entry name" value="ATP synthase epsilon chain, chloroplastic"/>
    <property type="match status" value="1"/>
</dbReference>
<dbReference type="Gene3D" id="6.10.140.480">
    <property type="match status" value="1"/>
</dbReference>
<dbReference type="Gene3D" id="2.60.15.10">
    <property type="entry name" value="F0F1 ATP synthase delta/epsilon subunit, N-terminal"/>
    <property type="match status" value="1"/>
</dbReference>
<dbReference type="HAMAP" id="MF_00530">
    <property type="entry name" value="ATP_synth_epsil_bac"/>
    <property type="match status" value="1"/>
</dbReference>
<dbReference type="InterPro" id="IPR001469">
    <property type="entry name" value="ATP_synth_F1_dsu/esu"/>
</dbReference>
<dbReference type="InterPro" id="IPR020546">
    <property type="entry name" value="ATP_synth_F1_dsu/esu_N"/>
</dbReference>
<dbReference type="InterPro" id="IPR020547">
    <property type="entry name" value="ATP_synth_F1_esu_C"/>
</dbReference>
<dbReference type="InterPro" id="IPR036771">
    <property type="entry name" value="ATPsynth_dsu/esu_N"/>
</dbReference>
<dbReference type="NCBIfam" id="TIGR01216">
    <property type="entry name" value="ATP_synt_epsi"/>
    <property type="match status" value="1"/>
</dbReference>
<dbReference type="PANTHER" id="PTHR13822">
    <property type="entry name" value="ATP SYNTHASE DELTA/EPSILON CHAIN"/>
    <property type="match status" value="1"/>
</dbReference>
<dbReference type="PANTHER" id="PTHR13822:SF10">
    <property type="entry name" value="ATP SYNTHASE EPSILON CHAIN, CHLOROPLASTIC"/>
    <property type="match status" value="1"/>
</dbReference>
<dbReference type="Pfam" id="PF00401">
    <property type="entry name" value="ATP-synt_DE"/>
    <property type="match status" value="1"/>
</dbReference>
<dbReference type="Pfam" id="PF02823">
    <property type="entry name" value="ATP-synt_DE_N"/>
    <property type="match status" value="1"/>
</dbReference>
<dbReference type="SUPFAM" id="SSF51344">
    <property type="entry name" value="Epsilon subunit of F1F0-ATP synthase N-terminal domain"/>
    <property type="match status" value="1"/>
</dbReference>
<name>ATPE_CITSI</name>
<reference key="1">
    <citation type="journal article" date="2006" name="BMC Plant Biol.">
        <title>The complete chloroplast genome sequence of Citrus sinensis (L.) Osbeck var 'Ridge Pineapple': organization and phylogenetic relationships to other angiosperms.</title>
        <authorList>
            <person name="Bausher M.G."/>
            <person name="Singh N.D."/>
            <person name="Lee S.-B."/>
            <person name="Jansen R.K."/>
            <person name="Daniell H."/>
        </authorList>
    </citation>
    <scope>NUCLEOTIDE SEQUENCE [LARGE SCALE GENOMIC DNA]</scope>
    <source>
        <strain>cv. Osbeck var. Ridge Pineapple</strain>
    </source>
</reference>
<comment type="function">
    <text evidence="1">Produces ATP from ADP in the presence of a proton gradient across the membrane.</text>
</comment>
<comment type="subunit">
    <text evidence="1">F-type ATPases have 2 components, CF(1) - the catalytic core - and CF(0) - the membrane proton channel. CF(1) has five subunits: alpha(3), beta(3), gamma(1), delta(1), epsilon(1). CF(0) has three main subunits: a, b and c.</text>
</comment>
<comment type="subcellular location">
    <subcellularLocation>
        <location evidence="1">Plastid</location>
        <location evidence="1">Chloroplast thylakoid membrane</location>
        <topology evidence="1">Peripheral membrane protein</topology>
    </subcellularLocation>
</comment>
<comment type="similarity">
    <text evidence="1">Belongs to the ATPase epsilon chain family.</text>
</comment>
<accession>Q09MH2</accession>
<keyword id="KW-0066">ATP synthesis</keyword>
<keyword id="KW-0139">CF(1)</keyword>
<keyword id="KW-0150">Chloroplast</keyword>
<keyword id="KW-0375">Hydrogen ion transport</keyword>
<keyword id="KW-0406">Ion transport</keyword>
<keyword id="KW-0472">Membrane</keyword>
<keyword id="KW-0934">Plastid</keyword>
<keyword id="KW-0793">Thylakoid</keyword>
<keyword id="KW-0813">Transport</keyword>
<protein>
    <recommendedName>
        <fullName evidence="1">ATP synthase epsilon chain, chloroplastic</fullName>
    </recommendedName>
    <alternativeName>
        <fullName evidence="1">ATP synthase F1 sector epsilon subunit</fullName>
    </alternativeName>
    <alternativeName>
        <fullName evidence="1">F-ATPase epsilon subunit</fullName>
    </alternativeName>
</protein>
<gene>
    <name evidence="1" type="primary">atpE</name>
</gene>
<geneLocation type="chloroplast"/>
<evidence type="ECO:0000255" key="1">
    <source>
        <dbReference type="HAMAP-Rule" id="MF_00530"/>
    </source>
</evidence>
<sequence>MTLNLCVLTPNRIVWDSEVKEIILSTNSGQIGVLPNHAPIATAVDIGILRIRFNDQWLTMALMGGFARIGNNEITILVNDAEKSSDIDPQEAQQTLEIAEANLRKAESKRQTIEANLALRRARTRVEVINAIS</sequence>
<proteinExistence type="inferred from homology"/>